<name>PSBF_SOLLC</name>
<accession>Q3SC83</accession>
<comment type="function">
    <text evidence="1">This b-type cytochrome is tightly associated with the reaction center of photosystem II (PSII). PSII is a light-driven water:plastoquinone oxidoreductase that uses light energy to abstract electrons from H(2)O, generating O(2) and a proton gradient subsequently used for ATP formation. It consists of a core antenna complex that captures photons, and an electron transfer chain that converts photonic excitation into a charge separation.</text>
</comment>
<comment type="cofactor">
    <cofactor evidence="1">
        <name>heme b</name>
        <dbReference type="ChEBI" id="CHEBI:60344"/>
    </cofactor>
    <text evidence="1">With its partner (PsbE) binds heme. PSII binds additional chlorophylls, carotenoids and specific lipids.</text>
</comment>
<comment type="subunit">
    <text evidence="1">Heterodimer of an alpha subunit and a beta subunit. PSII is composed of 1 copy each of membrane proteins PsbA, PsbB, PsbC, PsbD, PsbE, PsbF, PsbH, PsbI, PsbJ, PsbK, PsbL, PsbM, PsbT, PsbX, PsbY, PsbZ, Psb30/Ycf12, at least 3 peripheral proteins of the oxygen-evolving complex and a large number of cofactors. It forms dimeric complexes.</text>
</comment>
<comment type="subcellular location">
    <subcellularLocation>
        <location evidence="1">Plastid</location>
        <location evidence="1">Chloroplast thylakoid membrane</location>
        <topology evidence="1">Single-pass membrane protein</topology>
    </subcellularLocation>
</comment>
<comment type="similarity">
    <text evidence="1">Belongs to the PsbE/PsbF family.</text>
</comment>
<reference key="1">
    <citation type="submission" date="2005-05" db="EMBL/GenBank/DDBJ databases">
        <title>Signaling pathways downstream tomato disease resistance genes Cf-4 and Cf-9.</title>
        <authorList>
            <person name="Cai X."/>
            <person name="Hong W."/>
        </authorList>
    </citation>
    <scope>NUCLEOTIDE SEQUENCE [MRNA]</scope>
    <source>
        <strain>cv. Moneymaker</strain>
        <tissue>Cotyledon</tissue>
    </source>
</reference>
<reference key="2">
    <citation type="journal article" date="2006" name="Theor. Appl. Genet.">
        <title>Complete chloroplast genome sequences of Solanum bulbocastanum, Solanum lycopersicum and comparative analyses with other Solanaceae genomes.</title>
        <authorList>
            <person name="Daniell H."/>
            <person name="Lee S.-B."/>
            <person name="Grevich J."/>
            <person name="Saski C."/>
            <person name="Quesada-Vargas T."/>
            <person name="Guda C."/>
            <person name="Tomkins J."/>
            <person name="Jansen R.K."/>
        </authorList>
    </citation>
    <scope>NUCLEOTIDE SEQUENCE [LARGE SCALE GENOMIC DNA]</scope>
    <source>
        <strain>cv. LA3023</strain>
    </source>
</reference>
<reference key="3">
    <citation type="journal article" date="2006" name="J. Mol. Evol.">
        <title>Sequence of the tomato chloroplast DNA and evolutionary comparison of solanaceous plastid genomes.</title>
        <authorList>
            <person name="Kahlau S."/>
            <person name="Aspinall S."/>
            <person name="Gray J.C."/>
            <person name="Bock R."/>
        </authorList>
    </citation>
    <scope>NUCLEOTIDE SEQUENCE [LARGE SCALE GENOMIC DNA]</scope>
    <source>
        <strain>cv. IPA-6</strain>
    </source>
</reference>
<gene>
    <name evidence="1" type="primary">psbF</name>
    <name type="synonym">ACI37</name>
</gene>
<keyword id="KW-0150">Chloroplast</keyword>
<keyword id="KW-0249">Electron transport</keyword>
<keyword id="KW-0349">Heme</keyword>
<keyword id="KW-0408">Iron</keyword>
<keyword id="KW-0472">Membrane</keyword>
<keyword id="KW-0479">Metal-binding</keyword>
<keyword id="KW-0602">Photosynthesis</keyword>
<keyword id="KW-0604">Photosystem II</keyword>
<keyword id="KW-0934">Plastid</keyword>
<keyword id="KW-1185">Reference proteome</keyword>
<keyword id="KW-0793">Thylakoid</keyword>
<keyword id="KW-0812">Transmembrane</keyword>
<keyword id="KW-1133">Transmembrane helix</keyword>
<keyword id="KW-0813">Transport</keyword>
<dbReference type="EMBL" id="DQ056437">
    <property type="protein sequence ID" value="AAY97867.1"/>
    <property type="molecule type" value="mRNA"/>
</dbReference>
<dbReference type="EMBL" id="AM087200">
    <property type="protein sequence ID" value="CAJ32409.1"/>
    <property type="molecule type" value="Genomic_DNA"/>
</dbReference>
<dbReference type="EMBL" id="DQ347959">
    <property type="protein sequence ID" value="ABC56316.1"/>
    <property type="molecule type" value="Genomic_DNA"/>
</dbReference>
<dbReference type="RefSeq" id="AP_004944.1">
    <property type="nucleotide sequence ID" value="AC_000188.1"/>
</dbReference>
<dbReference type="RefSeq" id="YP_008563104.1">
    <property type="nucleotide sequence ID" value="NC_007898.3"/>
</dbReference>
<dbReference type="SMR" id="Q3SC83"/>
<dbReference type="FunCoup" id="Q3SC83">
    <property type="interactions" value="56"/>
</dbReference>
<dbReference type="STRING" id="4081.Q3SC83"/>
<dbReference type="PaxDb" id="4081-Solyc01g007410.2.1"/>
<dbReference type="GeneID" id="3950450"/>
<dbReference type="KEGG" id="sly:3950450"/>
<dbReference type="eggNOG" id="ENOG502SEUE">
    <property type="taxonomic scope" value="Eukaryota"/>
</dbReference>
<dbReference type="HOGENOM" id="CLU_211753_1_0_1"/>
<dbReference type="InParanoid" id="Q3SC83"/>
<dbReference type="OrthoDB" id="77at2759"/>
<dbReference type="PhylomeDB" id="Q3SC83"/>
<dbReference type="Proteomes" id="UP000004994">
    <property type="component" value="Chloroplast"/>
</dbReference>
<dbReference type="GO" id="GO:0009535">
    <property type="term" value="C:chloroplast thylakoid membrane"/>
    <property type="evidence" value="ECO:0007669"/>
    <property type="project" value="UniProtKB-SubCell"/>
</dbReference>
<dbReference type="GO" id="GO:0009539">
    <property type="term" value="C:photosystem II reaction center"/>
    <property type="evidence" value="ECO:0007669"/>
    <property type="project" value="InterPro"/>
</dbReference>
<dbReference type="GO" id="GO:0009055">
    <property type="term" value="F:electron transfer activity"/>
    <property type="evidence" value="ECO:0007669"/>
    <property type="project" value="UniProtKB-UniRule"/>
</dbReference>
<dbReference type="GO" id="GO:0020037">
    <property type="term" value="F:heme binding"/>
    <property type="evidence" value="ECO:0007669"/>
    <property type="project" value="InterPro"/>
</dbReference>
<dbReference type="GO" id="GO:0005506">
    <property type="term" value="F:iron ion binding"/>
    <property type="evidence" value="ECO:0007669"/>
    <property type="project" value="UniProtKB-UniRule"/>
</dbReference>
<dbReference type="GO" id="GO:0009767">
    <property type="term" value="P:photosynthetic electron transport chain"/>
    <property type="evidence" value="ECO:0007669"/>
    <property type="project" value="InterPro"/>
</dbReference>
<dbReference type="HAMAP" id="MF_00643">
    <property type="entry name" value="PSII_PsbF"/>
    <property type="match status" value="1"/>
</dbReference>
<dbReference type="InterPro" id="IPR006241">
    <property type="entry name" value="PSII_cyt_b559_bsu"/>
</dbReference>
<dbReference type="InterPro" id="IPR006216">
    <property type="entry name" value="PSII_cyt_b559_CS"/>
</dbReference>
<dbReference type="InterPro" id="IPR013081">
    <property type="entry name" value="PSII_cyt_b559_N"/>
</dbReference>
<dbReference type="NCBIfam" id="TIGR01333">
    <property type="entry name" value="cyt_b559_beta"/>
    <property type="match status" value="1"/>
</dbReference>
<dbReference type="Pfam" id="PF00283">
    <property type="entry name" value="Cytochrom_B559"/>
    <property type="match status" value="1"/>
</dbReference>
<dbReference type="PIRSF" id="PIRSF000037">
    <property type="entry name" value="PsbF"/>
    <property type="match status" value="1"/>
</dbReference>
<dbReference type="SUPFAM" id="SSF161045">
    <property type="entry name" value="Cytochrome b559 subunits"/>
    <property type="match status" value="1"/>
</dbReference>
<dbReference type="PROSITE" id="PS00537">
    <property type="entry name" value="CYTOCHROME_B559"/>
    <property type="match status" value="1"/>
</dbReference>
<protein>
    <recommendedName>
        <fullName evidence="1">Cytochrome b559 subunit beta</fullName>
    </recommendedName>
    <alternativeName>
        <fullName evidence="1">PSII reaction center subunit VI</fullName>
    </alternativeName>
</protein>
<feature type="chain" id="PRO_0000233643" description="Cytochrome b559 subunit beta">
    <location>
        <begin position="1"/>
        <end position="39"/>
    </location>
</feature>
<feature type="transmembrane region" description="Helical" evidence="1">
    <location>
        <begin position="14"/>
        <end position="30"/>
    </location>
</feature>
<feature type="binding site" description="axial binding residue" evidence="1">
    <location>
        <position position="18"/>
    </location>
    <ligand>
        <name>heme</name>
        <dbReference type="ChEBI" id="CHEBI:30413"/>
        <note>ligand shared with alpha subunit</note>
    </ligand>
    <ligandPart>
        <name>Fe</name>
        <dbReference type="ChEBI" id="CHEBI:18248"/>
    </ligandPart>
</feature>
<organism>
    <name type="scientific">Solanum lycopersicum</name>
    <name type="common">Tomato</name>
    <name type="synonym">Lycopersicon esculentum</name>
    <dbReference type="NCBI Taxonomy" id="4081"/>
    <lineage>
        <taxon>Eukaryota</taxon>
        <taxon>Viridiplantae</taxon>
        <taxon>Streptophyta</taxon>
        <taxon>Embryophyta</taxon>
        <taxon>Tracheophyta</taxon>
        <taxon>Spermatophyta</taxon>
        <taxon>Magnoliopsida</taxon>
        <taxon>eudicotyledons</taxon>
        <taxon>Gunneridae</taxon>
        <taxon>Pentapetalae</taxon>
        <taxon>asterids</taxon>
        <taxon>lamiids</taxon>
        <taxon>Solanales</taxon>
        <taxon>Solanaceae</taxon>
        <taxon>Solanoideae</taxon>
        <taxon>Solaneae</taxon>
        <taxon>Solanum</taxon>
        <taxon>Solanum subgen. Lycopersicon</taxon>
    </lineage>
</organism>
<proteinExistence type="inferred from homology"/>
<geneLocation type="chloroplast"/>
<evidence type="ECO:0000255" key="1">
    <source>
        <dbReference type="HAMAP-Rule" id="MF_00643"/>
    </source>
</evidence>
<sequence length="39" mass="4484">MTIDRTYPIFTVRWLAVHGLAVPTVFFLGSISAMQFIQR</sequence>